<accession>Q93454</accession>
<feature type="chain" id="PRO_0000051107" description="mRNA export factor rae-1" evidence="5">
    <location>
        <begin position="1"/>
        <end position="373"/>
    </location>
</feature>
<feature type="repeat" description="WD 1">
    <location>
        <begin position="40"/>
        <end position="82"/>
    </location>
</feature>
<feature type="repeat" description="WD 2">
    <location>
        <begin position="87"/>
        <end position="126"/>
    </location>
</feature>
<feature type="repeat" description="WD 3">
    <location>
        <begin position="128"/>
        <end position="169"/>
    </location>
</feature>
<feature type="repeat" description="WD 4">
    <location>
        <begin position="276"/>
        <end position="315"/>
    </location>
</feature>
<feature type="modified residue" description="N-acetylmethionine" evidence="4">
    <location>
        <position position="1"/>
    </location>
</feature>
<comment type="function">
    <text evidence="1 2 3">Functions as a component of the nuclear pore complex (NPC) (PubMed:12937276). NPC components, collectively referred to as nucleoporins (NUPs), can play the role of both NPC structural components and of docking or interaction partners for transiently associated nuclear transport factors (By similarity). It is specifically important for nuclear mRNA export (PubMed:12937276). Has a role in neuronal development, where it acts downstream of rpm-1 to control axon termination and synapse formation in anterior lateral microtubule (ALM) and posterior lateral microtubule (PLM) mechanosensory neurons (PubMed:22357847).</text>
</comment>
<comment type="subunit">
    <text evidence="1 3">The nuclear pore complex (NPC) constitutes the exclusive means of nucleocytoplasmic transport (By similarity). NPCs allow the passive diffusion of ions and small molecules and the active, nuclear transport receptor-mediated bidirectional transport of macromolecules such as proteins, RNAs, ribonucleoparticles (RNPs), and ribosomal subunits across the nuclear envelope (By similarity). Interacts with rpm-1 (PubMed:22357847).</text>
</comment>
<comment type="subcellular location">
    <subcellularLocation>
        <location evidence="2">Nucleus</location>
        <location evidence="2">Nuclear pore complex</location>
    </subcellularLocation>
    <subcellularLocation>
        <location evidence="3">Nucleus</location>
    </subcellularLocation>
    <subcellularLocation>
        <location evidence="3">Cell projection</location>
        <location evidence="3">Axon</location>
    </subcellularLocation>
    <subcellularLocation>
        <location evidence="3">Synapse</location>
    </subcellularLocation>
</comment>
<comment type="tissue specificity">
    <text evidence="3">Expressed along the ventral and dorsal nerve cords.</text>
</comment>
<comment type="similarity">
    <text evidence="5">Belongs to the WD repeat rae1 family.</text>
</comment>
<sequence>MFGSSGFGNKSMFGGSNISTSTTTPAANTTQNDDFLVDGAPEDTIQVIKFSPTPQDKPMLACGSWDGTIRVWMFNDANTFEGKAQQNIPAPILDIAWIEDSSKIFIACADKEARLWDLASNQVAVVGTHDGPVKTCHWINGNNYQCLMTGSFDKTLRFWDMKNLPNQTQMAQIQLPERVYAADVLYPMAVVALANKHIKVYNLENGPTEVKDIESQLKFQIRCISIFKDKSNQNPAGFALGSIEGRVAVQYVDVANPKDNFTFKCHRSAELVNGFQEIYAVNDICFHPQHGTLVTIGSDGRYSMWDKDARTKLKTSEPHPMPLTCCDVHSSGAFLVYALGYDWSRGHEGNTQPGSKIVIHKCIEDMKPRPTKK</sequence>
<keyword id="KW-0007">Acetylation</keyword>
<keyword id="KW-0966">Cell projection</keyword>
<keyword id="KW-0903">Direct protein sequencing</keyword>
<keyword id="KW-0509">mRNA transport</keyword>
<keyword id="KW-0906">Nuclear pore complex</keyword>
<keyword id="KW-0539">Nucleus</keyword>
<keyword id="KW-0653">Protein transport</keyword>
<keyword id="KW-1185">Reference proteome</keyword>
<keyword id="KW-0677">Repeat</keyword>
<keyword id="KW-0770">Synapse</keyword>
<keyword id="KW-0811">Translocation</keyword>
<keyword id="KW-0813">Transport</keyword>
<keyword id="KW-0853">WD repeat</keyword>
<dbReference type="EMBL" id="Z80216">
    <property type="protein sequence ID" value="CAB02280.1"/>
    <property type="molecule type" value="Genomic_DNA"/>
</dbReference>
<dbReference type="PIR" id="T20723">
    <property type="entry name" value="T20723"/>
</dbReference>
<dbReference type="RefSeq" id="NP_492650.1">
    <property type="nucleotide sequence ID" value="NM_060249.4"/>
</dbReference>
<dbReference type="SMR" id="Q93454"/>
<dbReference type="BioGRID" id="38286">
    <property type="interactions" value="18"/>
</dbReference>
<dbReference type="FunCoup" id="Q93454">
    <property type="interactions" value="3287"/>
</dbReference>
<dbReference type="IntAct" id="Q93454">
    <property type="interactions" value="1"/>
</dbReference>
<dbReference type="STRING" id="6239.F10G8.3.2"/>
<dbReference type="PaxDb" id="6239-F10G8.3.2"/>
<dbReference type="PeptideAtlas" id="Q93454"/>
<dbReference type="EnsemblMetazoa" id="F10G8.3.1">
    <property type="protein sequence ID" value="F10G8.3.1"/>
    <property type="gene ID" value="WBGene00003803"/>
</dbReference>
<dbReference type="EnsemblMetazoa" id="F10G8.3.2">
    <property type="protein sequence ID" value="F10G8.3.2"/>
    <property type="gene ID" value="WBGene00003803"/>
</dbReference>
<dbReference type="GeneID" id="172864"/>
<dbReference type="KEGG" id="cel:CELE_F10G8.3"/>
<dbReference type="UCSC" id="F10G8.3.1">
    <property type="organism name" value="c. elegans"/>
</dbReference>
<dbReference type="AGR" id="WB:WBGene00003803"/>
<dbReference type="CTD" id="172864"/>
<dbReference type="WormBase" id="F10G8.3">
    <property type="protein sequence ID" value="CE09338"/>
    <property type="gene ID" value="WBGene00003803"/>
    <property type="gene designation" value="rae-1"/>
</dbReference>
<dbReference type="eggNOG" id="KOG0647">
    <property type="taxonomic scope" value="Eukaryota"/>
</dbReference>
<dbReference type="GeneTree" id="ENSGT00950000183091"/>
<dbReference type="HOGENOM" id="CLU_038526_1_0_1"/>
<dbReference type="InParanoid" id="Q93454"/>
<dbReference type="OMA" id="EAMDQSI"/>
<dbReference type="OrthoDB" id="256303at2759"/>
<dbReference type="PhylomeDB" id="Q93454"/>
<dbReference type="SignaLink" id="Q93454"/>
<dbReference type="PRO" id="PR:Q93454"/>
<dbReference type="Proteomes" id="UP000001940">
    <property type="component" value="Chromosome I"/>
</dbReference>
<dbReference type="Bgee" id="WBGene00003803">
    <property type="expression patterns" value="Expressed in germ line (C elegans) and 4 other cell types or tissues"/>
</dbReference>
<dbReference type="GO" id="GO:0030424">
    <property type="term" value="C:axon"/>
    <property type="evidence" value="ECO:0007669"/>
    <property type="project" value="UniProtKB-SubCell"/>
</dbReference>
<dbReference type="GO" id="GO:0005643">
    <property type="term" value="C:nuclear pore"/>
    <property type="evidence" value="ECO:0000318"/>
    <property type="project" value="GO_Central"/>
</dbReference>
<dbReference type="GO" id="GO:0045202">
    <property type="term" value="C:synapse"/>
    <property type="evidence" value="ECO:0007669"/>
    <property type="project" value="UniProtKB-SubCell"/>
</dbReference>
<dbReference type="GO" id="GO:0003723">
    <property type="term" value="F:RNA binding"/>
    <property type="evidence" value="ECO:0000318"/>
    <property type="project" value="GO_Central"/>
</dbReference>
<dbReference type="GO" id="GO:0043130">
    <property type="term" value="F:ubiquitin binding"/>
    <property type="evidence" value="ECO:0000318"/>
    <property type="project" value="GO_Central"/>
</dbReference>
<dbReference type="GO" id="GO:0051028">
    <property type="term" value="P:mRNA transport"/>
    <property type="evidence" value="ECO:0007669"/>
    <property type="project" value="UniProtKB-KW"/>
</dbReference>
<dbReference type="GO" id="GO:0015031">
    <property type="term" value="P:protein transport"/>
    <property type="evidence" value="ECO:0007669"/>
    <property type="project" value="UniProtKB-KW"/>
</dbReference>
<dbReference type="GO" id="GO:0006405">
    <property type="term" value="P:RNA export from nucleus"/>
    <property type="evidence" value="ECO:0000318"/>
    <property type="project" value="GO_Central"/>
</dbReference>
<dbReference type="GO" id="GO:0000972">
    <property type="term" value="P:transcription-dependent tethering of RNA polymerase II gene DNA at nuclear periphery"/>
    <property type="evidence" value="ECO:0000318"/>
    <property type="project" value="GO_Central"/>
</dbReference>
<dbReference type="FunFam" id="2.130.10.10:FF:000776">
    <property type="entry name" value="mRNA export factor"/>
    <property type="match status" value="1"/>
</dbReference>
<dbReference type="Gene3D" id="2.130.10.10">
    <property type="entry name" value="YVTN repeat-like/Quinoprotein amine dehydrogenase"/>
    <property type="match status" value="1"/>
</dbReference>
<dbReference type="InterPro" id="IPR020472">
    <property type="entry name" value="G-protein_beta_WD-40_rep"/>
</dbReference>
<dbReference type="InterPro" id="IPR015943">
    <property type="entry name" value="WD40/YVTN_repeat-like_dom_sf"/>
</dbReference>
<dbReference type="InterPro" id="IPR019775">
    <property type="entry name" value="WD40_repeat_CS"/>
</dbReference>
<dbReference type="InterPro" id="IPR036322">
    <property type="entry name" value="WD40_repeat_dom_sf"/>
</dbReference>
<dbReference type="InterPro" id="IPR001680">
    <property type="entry name" value="WD40_rpt"/>
</dbReference>
<dbReference type="PANTHER" id="PTHR10971">
    <property type="entry name" value="MRNA EXPORT FACTOR AND BUB3"/>
    <property type="match status" value="1"/>
</dbReference>
<dbReference type="Pfam" id="PF00400">
    <property type="entry name" value="WD40"/>
    <property type="match status" value="3"/>
</dbReference>
<dbReference type="PRINTS" id="PR00320">
    <property type="entry name" value="GPROTEINBRPT"/>
</dbReference>
<dbReference type="SMART" id="SM00320">
    <property type="entry name" value="WD40"/>
    <property type="match status" value="5"/>
</dbReference>
<dbReference type="SUPFAM" id="SSF50978">
    <property type="entry name" value="WD40 repeat-like"/>
    <property type="match status" value="1"/>
</dbReference>
<dbReference type="PROSITE" id="PS00678">
    <property type="entry name" value="WD_REPEATS_1"/>
    <property type="match status" value="2"/>
</dbReference>
<dbReference type="PROSITE" id="PS50082">
    <property type="entry name" value="WD_REPEATS_2"/>
    <property type="match status" value="1"/>
</dbReference>
<dbReference type="PROSITE" id="PS50294">
    <property type="entry name" value="WD_REPEATS_REGION"/>
    <property type="match status" value="1"/>
</dbReference>
<gene>
    <name evidence="6" type="primary">rae-1</name>
    <name evidence="6" type="synonym">npp-17</name>
    <name evidence="6" type="ORF">F10G8.3</name>
</gene>
<evidence type="ECO:0000250" key="1">
    <source>
        <dbReference type="UniProtKB" id="P40066"/>
    </source>
</evidence>
<evidence type="ECO:0000269" key="2">
    <source>
    </source>
</evidence>
<evidence type="ECO:0000269" key="3">
    <source>
    </source>
</evidence>
<evidence type="ECO:0000269" key="4">
    <source ref="2"/>
</evidence>
<evidence type="ECO:0000305" key="5"/>
<evidence type="ECO:0000312" key="6">
    <source>
        <dbReference type="WormBase" id="F10G8.3"/>
    </source>
</evidence>
<name>RAE1_CAEEL</name>
<protein>
    <recommendedName>
        <fullName evidence="6">mRNA export factor rae-1</fullName>
    </recommendedName>
    <alternativeName>
        <fullName>Nuclear pore complex protein 17</fullName>
    </alternativeName>
    <alternativeName>
        <fullName>Nucleoporin-17</fullName>
    </alternativeName>
</protein>
<proteinExistence type="evidence at protein level"/>
<reference key="1">
    <citation type="journal article" date="1998" name="Science">
        <title>Genome sequence of the nematode C. elegans: a platform for investigating biology.</title>
        <authorList>
            <consortium name="The C. elegans sequencing consortium"/>
        </authorList>
    </citation>
    <scope>NUCLEOTIDE SEQUENCE [LARGE SCALE GENOMIC DNA]</scope>
    <source>
        <strain>Bristol N2</strain>
    </source>
</reference>
<reference key="2">
    <citation type="submission" date="2005-09" db="UniProtKB">
        <authorList>
            <person name="Bienvenut W.V."/>
        </authorList>
    </citation>
    <scope>PROTEIN SEQUENCE OF 1-10; 71-103; 163-196; 200-218; 231-264 AND 302-310</scope>
    <scope>IDENTIFICATION BY MASS SPECTROMETRY</scope>
    <scope>ACETYLATION AT MET-1</scope>
</reference>
<reference key="3">
    <citation type="journal article" date="2003" name="Mol. Biol. Cell">
        <title>Caenorhabditis elegans nucleoporins Nup93 and Nup205 determine the limit of nuclear pore complex size exclusion in vivo.</title>
        <authorList>
            <person name="Galy V."/>
            <person name="Mattaj I.W."/>
            <person name="Askjaer P."/>
        </authorList>
    </citation>
    <scope>FUNCTION</scope>
    <scope>SUBCELLULAR LOCATION</scope>
</reference>
<reference key="4">
    <citation type="journal article" date="2012" name="J. Neurosci.">
        <title>RAE-1, a novel PHR binding protein, is required for axon termination and synapse formation in Caenorhabditis elegans.</title>
        <authorList>
            <person name="Grill B."/>
            <person name="Chen L."/>
            <person name="Tulgren E.D."/>
            <person name="Baker S.T."/>
            <person name="Bienvenut W."/>
            <person name="Anderson M."/>
            <person name="Quadroni M."/>
            <person name="Jin Y."/>
            <person name="Garner C.C."/>
        </authorList>
    </citation>
    <scope>FUNCTION</scope>
    <scope>INTERACTION WITH RPM-1</scope>
    <scope>TISSUE SPECIFICITY</scope>
</reference>
<organism>
    <name type="scientific">Caenorhabditis elegans</name>
    <dbReference type="NCBI Taxonomy" id="6239"/>
    <lineage>
        <taxon>Eukaryota</taxon>
        <taxon>Metazoa</taxon>
        <taxon>Ecdysozoa</taxon>
        <taxon>Nematoda</taxon>
        <taxon>Chromadorea</taxon>
        <taxon>Rhabditida</taxon>
        <taxon>Rhabditina</taxon>
        <taxon>Rhabditomorpha</taxon>
        <taxon>Rhabditoidea</taxon>
        <taxon>Rhabditidae</taxon>
        <taxon>Peloderinae</taxon>
        <taxon>Caenorhabditis</taxon>
    </lineage>
</organism>